<sequence length="511" mass="56421">MASDSSFPGASSNVAEYSVSEISGALKRTVEDMFGHVRVRGEISGYRGPHSSGHAYFALKDDRARLEAVIWRGSMSRLRFRPEEGMEVIATGKLTTYPGSSKYQIVIEQMEPAGAGALMALLEERKQRLAAEGLFDPALKQLLPFMPRVIGVVTSPTGAVIRDIIHRISDRYPLRVIVWPVRVQGDTCGPEVATAVNGFNTLPDDGPIPRPDVLIVARGGGSLEDLWGFNDEIVVRAVAASHIPVISAVGHETDWTLIDLAADMRAPTPTGAAEMAVPVKADLQASLASQSARLSSAMSRFFDQKRQAHRAAARAMPSADQLLALPRRRFDEAASRLTRALFVNTQKKRVHFDGHARQLSPRLLQRRLVELERGVTMLGQRLPRALEAFLRERRTAFTHRANRLSPEPILRRTRLTGSTLEQLDRRRDQAVRLLIERVKRRSQELDRLMRTLSYESVLERGFAVVFDAQGKPVKQAAAVSPDDALSVRFRDGDVGVVARAGLTIPDPTKGQ</sequence>
<reference key="1">
    <citation type="journal article" date="2009" name="PLoS ONE">
        <title>Genome degradation in Brucella ovis corresponds with narrowing of its host range and tissue tropism.</title>
        <authorList>
            <person name="Tsolis R.M."/>
            <person name="Seshadri R."/>
            <person name="Santos R.L."/>
            <person name="Sangari F.J."/>
            <person name="Lobo J.M."/>
            <person name="de Jong M.F."/>
            <person name="Ren Q."/>
            <person name="Myers G."/>
            <person name="Brinkac L.M."/>
            <person name="Nelson W.C."/>
            <person name="Deboy R.T."/>
            <person name="Angiuoli S."/>
            <person name="Khouri H."/>
            <person name="Dimitrov G."/>
            <person name="Robinson J.R."/>
            <person name="Mulligan S."/>
            <person name="Walker R.L."/>
            <person name="Elzer P.E."/>
            <person name="Hassan K.A."/>
            <person name="Paulsen I.T."/>
        </authorList>
    </citation>
    <scope>NUCLEOTIDE SEQUENCE [LARGE SCALE GENOMIC DNA]</scope>
    <source>
        <strain>ATCC 25840 / 63/290 / NCTC 10512</strain>
    </source>
</reference>
<comment type="function">
    <text evidence="1">Bidirectionally degrades single-stranded DNA into large acid-insoluble oligonucleotides, which are then degraded further into small acid-soluble oligonucleotides.</text>
</comment>
<comment type="catalytic activity">
    <reaction evidence="1">
        <text>Exonucleolytic cleavage in either 5'- to 3'- or 3'- to 5'-direction to yield nucleoside 5'-phosphates.</text>
        <dbReference type="EC" id="3.1.11.6"/>
    </reaction>
</comment>
<comment type="subunit">
    <text evidence="1">Heterooligomer composed of large and small subunits.</text>
</comment>
<comment type="subcellular location">
    <subcellularLocation>
        <location evidence="1">Cytoplasm</location>
    </subcellularLocation>
</comment>
<comment type="similarity">
    <text evidence="1">Belongs to the XseA family.</text>
</comment>
<name>EX7L_BRUO2</name>
<dbReference type="EC" id="3.1.11.6" evidence="1"/>
<dbReference type="EMBL" id="CP000709">
    <property type="protein sequence ID" value="ABQ62044.1"/>
    <property type="molecule type" value="Genomic_DNA"/>
</dbReference>
<dbReference type="SMR" id="A5VV55"/>
<dbReference type="KEGG" id="bov:BOV_A0712"/>
<dbReference type="HOGENOM" id="CLU_023625_3_1_5"/>
<dbReference type="PhylomeDB" id="A5VV55"/>
<dbReference type="PRO" id="PR:A5VV55"/>
<dbReference type="Proteomes" id="UP000006383">
    <property type="component" value="Chromosome II"/>
</dbReference>
<dbReference type="GO" id="GO:0005737">
    <property type="term" value="C:cytoplasm"/>
    <property type="evidence" value="ECO:0007669"/>
    <property type="project" value="UniProtKB-SubCell"/>
</dbReference>
<dbReference type="GO" id="GO:0009318">
    <property type="term" value="C:exodeoxyribonuclease VII complex"/>
    <property type="evidence" value="ECO:0007669"/>
    <property type="project" value="InterPro"/>
</dbReference>
<dbReference type="GO" id="GO:0008855">
    <property type="term" value="F:exodeoxyribonuclease VII activity"/>
    <property type="evidence" value="ECO:0007669"/>
    <property type="project" value="UniProtKB-UniRule"/>
</dbReference>
<dbReference type="GO" id="GO:0003676">
    <property type="term" value="F:nucleic acid binding"/>
    <property type="evidence" value="ECO:0007669"/>
    <property type="project" value="InterPro"/>
</dbReference>
<dbReference type="GO" id="GO:0006308">
    <property type="term" value="P:DNA catabolic process"/>
    <property type="evidence" value="ECO:0007669"/>
    <property type="project" value="UniProtKB-UniRule"/>
</dbReference>
<dbReference type="CDD" id="cd04489">
    <property type="entry name" value="ExoVII_LU_OBF"/>
    <property type="match status" value="1"/>
</dbReference>
<dbReference type="HAMAP" id="MF_00378">
    <property type="entry name" value="Exonuc_7_L"/>
    <property type="match status" value="1"/>
</dbReference>
<dbReference type="InterPro" id="IPR003753">
    <property type="entry name" value="Exonuc_VII_L"/>
</dbReference>
<dbReference type="InterPro" id="IPR020579">
    <property type="entry name" value="Exonuc_VII_lsu_C"/>
</dbReference>
<dbReference type="InterPro" id="IPR025824">
    <property type="entry name" value="OB-fold_nuc-bd_dom"/>
</dbReference>
<dbReference type="NCBIfam" id="TIGR00237">
    <property type="entry name" value="xseA"/>
    <property type="match status" value="1"/>
</dbReference>
<dbReference type="PANTHER" id="PTHR30008">
    <property type="entry name" value="EXODEOXYRIBONUCLEASE 7 LARGE SUBUNIT"/>
    <property type="match status" value="1"/>
</dbReference>
<dbReference type="PANTHER" id="PTHR30008:SF0">
    <property type="entry name" value="EXODEOXYRIBONUCLEASE 7 LARGE SUBUNIT"/>
    <property type="match status" value="1"/>
</dbReference>
<dbReference type="Pfam" id="PF02601">
    <property type="entry name" value="Exonuc_VII_L"/>
    <property type="match status" value="2"/>
</dbReference>
<dbReference type="Pfam" id="PF13742">
    <property type="entry name" value="tRNA_anti_2"/>
    <property type="match status" value="1"/>
</dbReference>
<feature type="chain" id="PRO_0000303777" description="Exodeoxyribonuclease 7 large subunit">
    <location>
        <begin position="1"/>
        <end position="511"/>
    </location>
</feature>
<accession>A5VV55</accession>
<proteinExistence type="inferred from homology"/>
<keyword id="KW-0963">Cytoplasm</keyword>
<keyword id="KW-0269">Exonuclease</keyword>
<keyword id="KW-0378">Hydrolase</keyword>
<keyword id="KW-0540">Nuclease</keyword>
<evidence type="ECO:0000255" key="1">
    <source>
        <dbReference type="HAMAP-Rule" id="MF_00378"/>
    </source>
</evidence>
<protein>
    <recommendedName>
        <fullName evidence="1">Exodeoxyribonuclease 7 large subunit</fullName>
        <ecNumber evidence="1">3.1.11.6</ecNumber>
    </recommendedName>
    <alternativeName>
        <fullName evidence="1">Exodeoxyribonuclease VII large subunit</fullName>
        <shortName evidence="1">Exonuclease VII large subunit</shortName>
    </alternativeName>
</protein>
<organism>
    <name type="scientific">Brucella ovis (strain ATCC 25840 / 63/290 / NCTC 10512)</name>
    <dbReference type="NCBI Taxonomy" id="444178"/>
    <lineage>
        <taxon>Bacteria</taxon>
        <taxon>Pseudomonadati</taxon>
        <taxon>Pseudomonadota</taxon>
        <taxon>Alphaproteobacteria</taxon>
        <taxon>Hyphomicrobiales</taxon>
        <taxon>Brucellaceae</taxon>
        <taxon>Brucella/Ochrobactrum group</taxon>
        <taxon>Brucella</taxon>
    </lineage>
</organism>
<gene>
    <name evidence="1" type="primary">xseA</name>
    <name type="ordered locus">BOV_A0712</name>
</gene>